<comment type="function">
    <text evidence="1">Specifically methylates the uridine in position 2552 of 23S rRNA at the 2'-O position of the ribose in the fully assembled 50S ribosomal subunit.</text>
</comment>
<comment type="catalytic activity">
    <reaction evidence="1">
        <text>uridine(2552) in 23S rRNA + S-adenosyl-L-methionine = 2'-O-methyluridine(2552) in 23S rRNA + S-adenosyl-L-homocysteine + H(+)</text>
        <dbReference type="Rhea" id="RHEA:42720"/>
        <dbReference type="Rhea" id="RHEA-COMP:10202"/>
        <dbReference type="Rhea" id="RHEA-COMP:10203"/>
        <dbReference type="ChEBI" id="CHEBI:15378"/>
        <dbReference type="ChEBI" id="CHEBI:57856"/>
        <dbReference type="ChEBI" id="CHEBI:59789"/>
        <dbReference type="ChEBI" id="CHEBI:65315"/>
        <dbReference type="ChEBI" id="CHEBI:74478"/>
        <dbReference type="EC" id="2.1.1.166"/>
    </reaction>
</comment>
<comment type="subcellular location">
    <subcellularLocation>
        <location evidence="1">Cytoplasm</location>
    </subcellularLocation>
</comment>
<comment type="similarity">
    <text evidence="1">Belongs to the class I-like SAM-binding methyltransferase superfamily. RNA methyltransferase RlmE family.</text>
</comment>
<accession>Q8D2X0</accession>
<sequence>MKNMCSNWWLSEHYSDKFVKESKKCKYRSRAWFKIDEIQKKNNIIKPGMVVLDIGSSPGGWSKYSSQKVGMSGKVIACDIDLMNPIPNVSFILGNIFEKITIKKIKKVKKKVHIILCDISPNITGLSIIDHSRWISLNNNILNICKYLLLKNGKLIIKSFNSVEIKNFCKKIENSFKKIKIFKPISSRSRSKEIYIVAVNYKL</sequence>
<name>RLME_WIGBR</name>
<protein>
    <recommendedName>
        <fullName evidence="1">Ribosomal RNA large subunit methyltransferase E</fullName>
        <ecNumber evidence="1">2.1.1.166</ecNumber>
    </recommendedName>
    <alternativeName>
        <fullName evidence="1">23S rRNA Um2552 methyltransferase</fullName>
    </alternativeName>
    <alternativeName>
        <fullName evidence="1">rRNA (uridine-2'-O-)-methyltransferase</fullName>
    </alternativeName>
</protein>
<feature type="chain" id="PRO_0000155551" description="Ribosomal RNA large subunit methyltransferase E">
    <location>
        <begin position="1"/>
        <end position="203"/>
    </location>
</feature>
<feature type="active site" description="Proton acceptor" evidence="1">
    <location>
        <position position="158"/>
    </location>
</feature>
<feature type="binding site" evidence="1">
    <location>
        <position position="59"/>
    </location>
    <ligand>
        <name>S-adenosyl-L-methionine</name>
        <dbReference type="ChEBI" id="CHEBI:59789"/>
    </ligand>
</feature>
<feature type="binding site" evidence="1">
    <location>
        <position position="61"/>
    </location>
    <ligand>
        <name>S-adenosyl-L-methionine</name>
        <dbReference type="ChEBI" id="CHEBI:59789"/>
    </ligand>
</feature>
<feature type="binding site" evidence="1">
    <location>
        <position position="79"/>
    </location>
    <ligand>
        <name>S-adenosyl-L-methionine</name>
        <dbReference type="ChEBI" id="CHEBI:59789"/>
    </ligand>
</feature>
<feature type="binding site" evidence="1">
    <location>
        <position position="95"/>
    </location>
    <ligand>
        <name>S-adenosyl-L-methionine</name>
        <dbReference type="ChEBI" id="CHEBI:59789"/>
    </ligand>
</feature>
<feature type="binding site" evidence="1">
    <location>
        <position position="118"/>
    </location>
    <ligand>
        <name>S-adenosyl-L-methionine</name>
        <dbReference type="ChEBI" id="CHEBI:59789"/>
    </ligand>
</feature>
<reference key="1">
    <citation type="journal article" date="2002" name="Nat. Genet.">
        <title>Genome sequence of the endocellular obligate symbiont of tsetse flies, Wigglesworthia glossinidia.</title>
        <authorList>
            <person name="Akman L."/>
            <person name="Yamashita A."/>
            <person name="Watanabe H."/>
            <person name="Oshima K."/>
            <person name="Shiba T."/>
            <person name="Hattori M."/>
            <person name="Aksoy S."/>
        </authorList>
    </citation>
    <scope>NUCLEOTIDE SEQUENCE [LARGE SCALE GENOMIC DNA]</scope>
</reference>
<evidence type="ECO:0000255" key="1">
    <source>
        <dbReference type="HAMAP-Rule" id="MF_01547"/>
    </source>
</evidence>
<proteinExistence type="inferred from homology"/>
<organism>
    <name type="scientific">Wigglesworthia glossinidia brevipalpis</name>
    <dbReference type="NCBI Taxonomy" id="36870"/>
    <lineage>
        <taxon>Bacteria</taxon>
        <taxon>Pseudomonadati</taxon>
        <taxon>Pseudomonadota</taxon>
        <taxon>Gammaproteobacteria</taxon>
        <taxon>Enterobacterales</taxon>
        <taxon>Erwiniaceae</taxon>
        <taxon>Wigglesworthia</taxon>
    </lineage>
</organism>
<dbReference type="EC" id="2.1.1.166" evidence="1"/>
<dbReference type="EMBL" id="BA000021">
    <property type="protein sequence ID" value="BAC24378.1"/>
    <property type="molecule type" value="Genomic_DNA"/>
</dbReference>
<dbReference type="SMR" id="Q8D2X0"/>
<dbReference type="STRING" id="36870.gene:10368722"/>
<dbReference type="KEGG" id="wbr:ftsJ"/>
<dbReference type="eggNOG" id="COG0293">
    <property type="taxonomic scope" value="Bacteria"/>
</dbReference>
<dbReference type="HOGENOM" id="CLU_163718_0_0_6"/>
<dbReference type="Proteomes" id="UP000000562">
    <property type="component" value="Chromosome"/>
</dbReference>
<dbReference type="GO" id="GO:0005737">
    <property type="term" value="C:cytoplasm"/>
    <property type="evidence" value="ECO:0007669"/>
    <property type="project" value="UniProtKB-SubCell"/>
</dbReference>
<dbReference type="GO" id="GO:0008650">
    <property type="term" value="F:rRNA (uridine-2'-O-)-methyltransferase activity"/>
    <property type="evidence" value="ECO:0007669"/>
    <property type="project" value="UniProtKB-UniRule"/>
</dbReference>
<dbReference type="Gene3D" id="3.40.50.150">
    <property type="entry name" value="Vaccinia Virus protein VP39"/>
    <property type="match status" value="1"/>
</dbReference>
<dbReference type="HAMAP" id="MF_01547">
    <property type="entry name" value="RNA_methyltr_E"/>
    <property type="match status" value="1"/>
</dbReference>
<dbReference type="InterPro" id="IPR050082">
    <property type="entry name" value="RNA_methyltr_RlmE"/>
</dbReference>
<dbReference type="InterPro" id="IPR002877">
    <property type="entry name" value="RNA_MeTrfase_FtsJ_dom"/>
</dbReference>
<dbReference type="InterPro" id="IPR015507">
    <property type="entry name" value="rRNA-MeTfrase_E"/>
</dbReference>
<dbReference type="InterPro" id="IPR029063">
    <property type="entry name" value="SAM-dependent_MTases_sf"/>
</dbReference>
<dbReference type="PANTHER" id="PTHR10920">
    <property type="entry name" value="RIBOSOMAL RNA METHYLTRANSFERASE"/>
    <property type="match status" value="1"/>
</dbReference>
<dbReference type="PANTHER" id="PTHR10920:SF18">
    <property type="entry name" value="RRNA METHYLTRANSFERASE 2, MITOCHONDRIAL"/>
    <property type="match status" value="1"/>
</dbReference>
<dbReference type="Pfam" id="PF01728">
    <property type="entry name" value="FtsJ"/>
    <property type="match status" value="1"/>
</dbReference>
<dbReference type="PIRSF" id="PIRSF005461">
    <property type="entry name" value="23S_rRNA_mtase"/>
    <property type="match status" value="1"/>
</dbReference>
<dbReference type="SUPFAM" id="SSF53335">
    <property type="entry name" value="S-adenosyl-L-methionine-dependent methyltransferases"/>
    <property type="match status" value="1"/>
</dbReference>
<keyword id="KW-0963">Cytoplasm</keyword>
<keyword id="KW-0489">Methyltransferase</keyword>
<keyword id="KW-1185">Reference proteome</keyword>
<keyword id="KW-0698">rRNA processing</keyword>
<keyword id="KW-0949">S-adenosyl-L-methionine</keyword>
<keyword id="KW-0808">Transferase</keyword>
<gene>
    <name evidence="1" type="primary">rlmE</name>
    <name evidence="1" type="synonym">ftsJ</name>
    <name evidence="1" type="synonym">rrmJ</name>
    <name type="ordered locus">WIGBR2320</name>
</gene>